<gene>
    <name evidence="1" type="primary">mutL</name>
    <name type="ordered locus">Pcar_1304</name>
</gene>
<accession>Q3A504</accession>
<sequence>MSQKIHILPESLCNQIAAGEVVERPASVVKELVENALDAGASRIQVDVENGGKRLIRVTDNGCGMSREDAFLCLERHATSKVRAEQDLFRLTTLGFRGEALPSIAAVSRFTLRTRLAEDVEGWELVVEGGTVKRSSAAGVPPGTIIEIRNLFFNTPARRKFLRRDETELGHIGETLTRLALSCPEVCFRFMHNGRMLWEVNRQKSLVERAAELLGREAVRDMLPVERQGPEGMRLHGLISSPRLNRSGLGGMFTFINGRFIRDKVVQHALADGYRNLLAKGRHPVLVLFLEIDPSQVDVNVHPTKHEVRFRQQALVHDFIVKALRDHLQQVPTSAMPAPGNSPFTVPARENAASVKPDETKPALADTPAAFSAGEGSSRSDVPYPSASQVTETTDSYDAHDSGVEGASTAPPLSEEGLFSVTADVRPSEQTENSGFFASLRLIGQYQNSYLVCQSEKDLILIDQHAAHERIGFEHLRKQYLAGSIERQLLLFPLVLEFDFRLGRIVEEQRDSLFRLGFALENFGGNAFALKELPRMLKEADAERLVRDVVDEFAAIGRSQAVEIELERILLKMACHAMVRAHQRLSFDEMQALLDELDKTPFSSNCPHGRPTFLRWSLGELERLFKRA</sequence>
<protein>
    <recommendedName>
        <fullName evidence="1">DNA mismatch repair protein MutL</fullName>
    </recommendedName>
</protein>
<evidence type="ECO:0000255" key="1">
    <source>
        <dbReference type="HAMAP-Rule" id="MF_00149"/>
    </source>
</evidence>
<evidence type="ECO:0000256" key="2">
    <source>
        <dbReference type="SAM" id="MobiDB-lite"/>
    </source>
</evidence>
<reference key="1">
    <citation type="submission" date="2005-10" db="EMBL/GenBank/DDBJ databases">
        <title>Complete sequence of Pelobacter carbinolicus DSM 2380.</title>
        <authorList>
            <person name="Copeland A."/>
            <person name="Lucas S."/>
            <person name="Lapidus A."/>
            <person name="Barry K."/>
            <person name="Detter J.C."/>
            <person name="Glavina T."/>
            <person name="Hammon N."/>
            <person name="Israni S."/>
            <person name="Pitluck S."/>
            <person name="Chertkov O."/>
            <person name="Schmutz J."/>
            <person name="Larimer F."/>
            <person name="Land M."/>
            <person name="Kyrpides N."/>
            <person name="Ivanova N."/>
            <person name="Richardson P."/>
        </authorList>
    </citation>
    <scope>NUCLEOTIDE SEQUENCE [LARGE SCALE GENOMIC DNA]</scope>
    <source>
        <strain>DSM 2380 / NBRC 103641 / GraBd1</strain>
    </source>
</reference>
<name>MUTL_SYNC1</name>
<keyword id="KW-0227">DNA damage</keyword>
<keyword id="KW-0234">DNA repair</keyword>
<keyword id="KW-1185">Reference proteome</keyword>
<organism>
    <name type="scientific">Syntrophotalea carbinolica (strain DSM 2380 / NBRC 103641 / GraBd1)</name>
    <name type="common">Pelobacter carbinolicus</name>
    <dbReference type="NCBI Taxonomy" id="338963"/>
    <lineage>
        <taxon>Bacteria</taxon>
        <taxon>Pseudomonadati</taxon>
        <taxon>Thermodesulfobacteriota</taxon>
        <taxon>Desulfuromonadia</taxon>
        <taxon>Desulfuromonadales</taxon>
        <taxon>Syntrophotaleaceae</taxon>
        <taxon>Syntrophotalea</taxon>
    </lineage>
</organism>
<proteinExistence type="inferred from homology"/>
<comment type="function">
    <text evidence="1">This protein is involved in the repair of mismatches in DNA. It is required for dam-dependent methyl-directed DNA mismatch repair. May act as a 'molecular matchmaker', a protein that promotes the formation of a stable complex between two or more DNA-binding proteins in an ATP-dependent manner without itself being part of a final effector complex.</text>
</comment>
<comment type="similarity">
    <text evidence="1">Belongs to the DNA mismatch repair MutL/HexB family.</text>
</comment>
<feature type="chain" id="PRO_1000010053" description="DNA mismatch repair protein MutL">
    <location>
        <begin position="1"/>
        <end position="628"/>
    </location>
</feature>
<feature type="region of interest" description="Disordered" evidence="2">
    <location>
        <begin position="332"/>
        <end position="416"/>
    </location>
</feature>
<feature type="compositionally biased region" description="Polar residues" evidence="2">
    <location>
        <begin position="375"/>
        <end position="396"/>
    </location>
</feature>
<dbReference type="EMBL" id="CP000142">
    <property type="protein sequence ID" value="ABA88553.1"/>
    <property type="molecule type" value="Genomic_DNA"/>
</dbReference>
<dbReference type="RefSeq" id="WP_011341028.1">
    <property type="nucleotide sequence ID" value="NC_007498.2"/>
</dbReference>
<dbReference type="SMR" id="Q3A504"/>
<dbReference type="STRING" id="338963.Pcar_1304"/>
<dbReference type="KEGG" id="pca:Pcar_1304"/>
<dbReference type="eggNOG" id="COG0323">
    <property type="taxonomic scope" value="Bacteria"/>
</dbReference>
<dbReference type="HOGENOM" id="CLU_004131_4_2_7"/>
<dbReference type="OrthoDB" id="9763467at2"/>
<dbReference type="Proteomes" id="UP000002534">
    <property type="component" value="Chromosome"/>
</dbReference>
<dbReference type="GO" id="GO:0032300">
    <property type="term" value="C:mismatch repair complex"/>
    <property type="evidence" value="ECO:0007669"/>
    <property type="project" value="InterPro"/>
</dbReference>
<dbReference type="GO" id="GO:0005524">
    <property type="term" value="F:ATP binding"/>
    <property type="evidence" value="ECO:0007669"/>
    <property type="project" value="InterPro"/>
</dbReference>
<dbReference type="GO" id="GO:0016887">
    <property type="term" value="F:ATP hydrolysis activity"/>
    <property type="evidence" value="ECO:0007669"/>
    <property type="project" value="InterPro"/>
</dbReference>
<dbReference type="GO" id="GO:0140664">
    <property type="term" value="F:ATP-dependent DNA damage sensor activity"/>
    <property type="evidence" value="ECO:0007669"/>
    <property type="project" value="InterPro"/>
</dbReference>
<dbReference type="GO" id="GO:0030983">
    <property type="term" value="F:mismatched DNA binding"/>
    <property type="evidence" value="ECO:0007669"/>
    <property type="project" value="InterPro"/>
</dbReference>
<dbReference type="GO" id="GO:0006298">
    <property type="term" value="P:mismatch repair"/>
    <property type="evidence" value="ECO:0007669"/>
    <property type="project" value="UniProtKB-UniRule"/>
</dbReference>
<dbReference type="CDD" id="cd16926">
    <property type="entry name" value="HATPase_MutL-MLH-PMS-like"/>
    <property type="match status" value="1"/>
</dbReference>
<dbReference type="CDD" id="cd00782">
    <property type="entry name" value="MutL_Trans"/>
    <property type="match status" value="1"/>
</dbReference>
<dbReference type="FunFam" id="3.30.565.10:FF:000003">
    <property type="entry name" value="DNA mismatch repair endonuclease MutL"/>
    <property type="match status" value="1"/>
</dbReference>
<dbReference type="Gene3D" id="3.30.230.10">
    <property type="match status" value="1"/>
</dbReference>
<dbReference type="Gene3D" id="3.30.565.10">
    <property type="entry name" value="Histidine kinase-like ATPase, C-terminal domain"/>
    <property type="match status" value="1"/>
</dbReference>
<dbReference type="Gene3D" id="3.30.1540.20">
    <property type="entry name" value="MutL, C-terminal domain, dimerisation subdomain"/>
    <property type="match status" value="1"/>
</dbReference>
<dbReference type="Gene3D" id="3.30.1370.100">
    <property type="entry name" value="MutL, C-terminal domain, regulatory subdomain"/>
    <property type="match status" value="1"/>
</dbReference>
<dbReference type="HAMAP" id="MF_00149">
    <property type="entry name" value="DNA_mis_repair"/>
    <property type="match status" value="1"/>
</dbReference>
<dbReference type="InterPro" id="IPR014762">
    <property type="entry name" value="DNA_mismatch_repair_CS"/>
</dbReference>
<dbReference type="InterPro" id="IPR020667">
    <property type="entry name" value="DNA_mismatch_repair_MutL"/>
</dbReference>
<dbReference type="InterPro" id="IPR013507">
    <property type="entry name" value="DNA_mismatch_S5_2-like"/>
</dbReference>
<dbReference type="InterPro" id="IPR036890">
    <property type="entry name" value="HATPase_C_sf"/>
</dbReference>
<dbReference type="InterPro" id="IPR002099">
    <property type="entry name" value="MutL/Mlh/PMS"/>
</dbReference>
<dbReference type="InterPro" id="IPR038973">
    <property type="entry name" value="MutL/Mlh/Pms-like"/>
</dbReference>
<dbReference type="InterPro" id="IPR014790">
    <property type="entry name" value="MutL_C"/>
</dbReference>
<dbReference type="InterPro" id="IPR042120">
    <property type="entry name" value="MutL_C_dimsub"/>
</dbReference>
<dbReference type="InterPro" id="IPR042121">
    <property type="entry name" value="MutL_C_regsub"/>
</dbReference>
<dbReference type="InterPro" id="IPR037198">
    <property type="entry name" value="MutL_C_sf"/>
</dbReference>
<dbReference type="InterPro" id="IPR020568">
    <property type="entry name" value="Ribosomal_Su5_D2-typ_SF"/>
</dbReference>
<dbReference type="InterPro" id="IPR014721">
    <property type="entry name" value="Ribsml_uS5_D2-typ_fold_subgr"/>
</dbReference>
<dbReference type="NCBIfam" id="TIGR00585">
    <property type="entry name" value="mutl"/>
    <property type="match status" value="1"/>
</dbReference>
<dbReference type="PANTHER" id="PTHR10073">
    <property type="entry name" value="DNA MISMATCH REPAIR PROTEIN MLH, PMS, MUTL"/>
    <property type="match status" value="1"/>
</dbReference>
<dbReference type="PANTHER" id="PTHR10073:SF12">
    <property type="entry name" value="DNA MISMATCH REPAIR PROTEIN MLH1"/>
    <property type="match status" value="1"/>
</dbReference>
<dbReference type="Pfam" id="PF01119">
    <property type="entry name" value="DNA_mis_repair"/>
    <property type="match status" value="1"/>
</dbReference>
<dbReference type="Pfam" id="PF13589">
    <property type="entry name" value="HATPase_c_3"/>
    <property type="match status" value="1"/>
</dbReference>
<dbReference type="Pfam" id="PF08676">
    <property type="entry name" value="MutL_C"/>
    <property type="match status" value="1"/>
</dbReference>
<dbReference type="SMART" id="SM01340">
    <property type="entry name" value="DNA_mis_repair"/>
    <property type="match status" value="1"/>
</dbReference>
<dbReference type="SMART" id="SM00853">
    <property type="entry name" value="MutL_C"/>
    <property type="match status" value="1"/>
</dbReference>
<dbReference type="SUPFAM" id="SSF55874">
    <property type="entry name" value="ATPase domain of HSP90 chaperone/DNA topoisomerase II/histidine kinase"/>
    <property type="match status" value="1"/>
</dbReference>
<dbReference type="SUPFAM" id="SSF118116">
    <property type="entry name" value="DNA mismatch repair protein MutL"/>
    <property type="match status" value="1"/>
</dbReference>
<dbReference type="SUPFAM" id="SSF54211">
    <property type="entry name" value="Ribosomal protein S5 domain 2-like"/>
    <property type="match status" value="1"/>
</dbReference>
<dbReference type="PROSITE" id="PS00058">
    <property type="entry name" value="DNA_MISMATCH_REPAIR_1"/>
    <property type="match status" value="1"/>
</dbReference>